<proteinExistence type="inferred from homology"/>
<sequence length="442" mass="46662">MSGLAYLDLPAARLARGEVALPGSKSISNRVLLLAALAEGSTEITGLLDSDDTRVMLAALRQLGVSVGEVADGCVTIEGVARFPTEQAELFLGNAGTAFRPLTAALALMGGDYRLSGVPRMHERPIGDLVDALRQFGAGIEYLGQAGYPPLRIGGGSIRVDGPVRVEGSVSSQFLTALLMAAPVLARRSGQDITIEVVGELISKPYIEITLNLMARFGVSVRRDGWRAFTIARDAVYRGPGRMAIEGDASTASYFLALGAIGGGPVRVTGVGEDSIQGDVAFAATLAAMGADVRYGPGWIETRGVRVAEGGRLKAFDADFNLIPDAAMTAATLALYADGPCRLRNIGSWRVKETDRIHAMHTELEKLGAGVQSGADWLEVAPPEPGGWRDAHIGTWDDHRMAMCFSLAAFGPAAVRILDPGCVSKTFPDYFDVYAGLLAARD</sequence>
<gene>
    <name evidence="1" type="primary">aroA</name>
    <name type="ordered locus">BP0948</name>
</gene>
<protein>
    <recommendedName>
        <fullName evidence="1">3-phosphoshikimate 1-carboxyvinyltransferase</fullName>
        <ecNumber evidence="1">2.5.1.19</ecNumber>
    </recommendedName>
    <alternativeName>
        <fullName evidence="1">5-enolpyruvylshikimate-3-phosphate synthase</fullName>
        <shortName evidence="1">EPSP synthase</shortName>
        <shortName evidence="1">EPSPS</shortName>
    </alternativeName>
</protein>
<name>AROA_BORPE</name>
<accession>P12421</accession>
<comment type="function">
    <text evidence="1">Catalyzes the transfer of the enolpyruvyl moiety of phosphoenolpyruvate (PEP) to the 5-hydroxyl of shikimate-3-phosphate (S3P) to produce enolpyruvyl shikimate-3-phosphate and inorganic phosphate.</text>
</comment>
<comment type="catalytic activity">
    <reaction evidence="1">
        <text>3-phosphoshikimate + phosphoenolpyruvate = 5-O-(1-carboxyvinyl)-3-phosphoshikimate + phosphate</text>
        <dbReference type="Rhea" id="RHEA:21256"/>
        <dbReference type="ChEBI" id="CHEBI:43474"/>
        <dbReference type="ChEBI" id="CHEBI:57701"/>
        <dbReference type="ChEBI" id="CHEBI:58702"/>
        <dbReference type="ChEBI" id="CHEBI:145989"/>
        <dbReference type="EC" id="2.5.1.19"/>
    </reaction>
    <physiologicalReaction direction="left-to-right" evidence="1">
        <dbReference type="Rhea" id="RHEA:21257"/>
    </physiologicalReaction>
</comment>
<comment type="pathway">
    <text evidence="1">Metabolic intermediate biosynthesis; chorismate biosynthesis; chorismate from D-erythrose 4-phosphate and phosphoenolpyruvate: step 6/7.</text>
</comment>
<comment type="subunit">
    <text evidence="1">Monomer.</text>
</comment>
<comment type="subcellular location">
    <subcellularLocation>
        <location evidence="1">Cytoplasm</location>
    </subcellularLocation>
</comment>
<comment type="similarity">
    <text evidence="1 2">Belongs to the EPSP synthase family.</text>
</comment>
<feature type="chain" id="PRO_0000088229" description="3-phosphoshikimate 1-carboxyvinyltransferase">
    <location>
        <begin position="1"/>
        <end position="442"/>
    </location>
</feature>
<feature type="active site" description="Proton acceptor" evidence="1">
    <location>
        <position position="325"/>
    </location>
</feature>
<feature type="binding site" evidence="1">
    <location>
        <position position="25"/>
    </location>
    <ligand>
        <name>3-phosphoshikimate</name>
        <dbReference type="ChEBI" id="CHEBI:145989"/>
    </ligand>
</feature>
<feature type="binding site" evidence="1">
    <location>
        <position position="25"/>
    </location>
    <ligand>
        <name>phosphoenolpyruvate</name>
        <dbReference type="ChEBI" id="CHEBI:58702"/>
    </ligand>
</feature>
<feature type="binding site" evidence="1">
    <location>
        <position position="26"/>
    </location>
    <ligand>
        <name>3-phosphoshikimate</name>
        <dbReference type="ChEBI" id="CHEBI:145989"/>
    </ligand>
</feature>
<feature type="binding site" evidence="1">
    <location>
        <position position="30"/>
    </location>
    <ligand>
        <name>3-phosphoshikimate</name>
        <dbReference type="ChEBI" id="CHEBI:145989"/>
    </ligand>
</feature>
<feature type="binding site" evidence="1">
    <location>
        <position position="96"/>
    </location>
    <ligand>
        <name>phosphoenolpyruvate</name>
        <dbReference type="ChEBI" id="CHEBI:58702"/>
    </ligand>
</feature>
<feature type="binding site" evidence="1">
    <location>
        <position position="124"/>
    </location>
    <ligand>
        <name>phosphoenolpyruvate</name>
        <dbReference type="ChEBI" id="CHEBI:58702"/>
    </ligand>
</feature>
<feature type="binding site" evidence="1">
    <location>
        <position position="171"/>
    </location>
    <ligand>
        <name>3-phosphoshikimate</name>
        <dbReference type="ChEBI" id="CHEBI:145989"/>
    </ligand>
</feature>
<feature type="binding site" evidence="1">
    <location>
        <position position="172"/>
    </location>
    <ligand>
        <name>3-phosphoshikimate</name>
        <dbReference type="ChEBI" id="CHEBI:145989"/>
    </ligand>
</feature>
<feature type="binding site" evidence="1">
    <location>
        <position position="173"/>
    </location>
    <ligand>
        <name>3-phosphoshikimate</name>
        <dbReference type="ChEBI" id="CHEBI:145989"/>
    </ligand>
</feature>
<feature type="binding site" evidence="1">
    <location>
        <position position="173"/>
    </location>
    <ligand>
        <name>phosphoenolpyruvate</name>
        <dbReference type="ChEBI" id="CHEBI:58702"/>
    </ligand>
</feature>
<feature type="binding site" evidence="1">
    <location>
        <position position="203"/>
    </location>
    <ligand>
        <name>3-phosphoshikimate</name>
        <dbReference type="ChEBI" id="CHEBI:145989"/>
    </ligand>
</feature>
<feature type="binding site" evidence="1">
    <location>
        <position position="325"/>
    </location>
    <ligand>
        <name>3-phosphoshikimate</name>
        <dbReference type="ChEBI" id="CHEBI:145989"/>
    </ligand>
</feature>
<feature type="binding site" evidence="1">
    <location>
        <position position="352"/>
    </location>
    <ligand>
        <name>3-phosphoshikimate</name>
        <dbReference type="ChEBI" id="CHEBI:145989"/>
    </ligand>
</feature>
<feature type="binding site" evidence="1">
    <location>
        <position position="356"/>
    </location>
    <ligand>
        <name>phosphoenolpyruvate</name>
        <dbReference type="ChEBI" id="CHEBI:58702"/>
    </ligand>
</feature>
<feature type="binding site" evidence="1">
    <location>
        <position position="400"/>
    </location>
    <ligand>
        <name>phosphoenolpyruvate</name>
        <dbReference type="ChEBI" id="CHEBI:58702"/>
    </ligand>
</feature>
<feature type="binding site" evidence="1">
    <location>
        <position position="425"/>
    </location>
    <ligand>
        <name>phosphoenolpyruvate</name>
        <dbReference type="ChEBI" id="CHEBI:58702"/>
    </ligand>
</feature>
<feature type="sequence conflict" description="In Ref. 1; AAA22968." evidence="2" ref="1">
    <original>S</original>
    <variation>L</variation>
    <location>
        <position position="406"/>
    </location>
</feature>
<keyword id="KW-0028">Amino-acid biosynthesis</keyword>
<keyword id="KW-0057">Aromatic amino acid biosynthesis</keyword>
<keyword id="KW-0963">Cytoplasm</keyword>
<keyword id="KW-1185">Reference proteome</keyword>
<keyword id="KW-0808">Transferase</keyword>
<organism>
    <name type="scientific">Bordetella pertussis (strain Tohama I / ATCC BAA-589 / NCTC 13251)</name>
    <dbReference type="NCBI Taxonomy" id="257313"/>
    <lineage>
        <taxon>Bacteria</taxon>
        <taxon>Pseudomonadati</taxon>
        <taxon>Pseudomonadota</taxon>
        <taxon>Betaproteobacteria</taxon>
        <taxon>Burkholderiales</taxon>
        <taxon>Alcaligenaceae</taxon>
        <taxon>Bordetella</taxon>
    </lineage>
</organism>
<reference key="1">
    <citation type="journal article" date="1988" name="J. Bacteriol.">
        <title>Cloning and nucleotide sequence of the aroA gene of Bordetella pertussis.</title>
        <authorList>
            <person name="Maskell D.J."/>
            <person name="Morrissey P."/>
            <person name="Dougan G."/>
        </authorList>
    </citation>
    <scope>NUCLEOTIDE SEQUENCE [GENOMIC DNA]</scope>
</reference>
<reference key="2">
    <citation type="journal article" date="2003" name="Nat. Genet.">
        <title>Comparative analysis of the genome sequences of Bordetella pertussis, Bordetella parapertussis and Bordetella bronchiseptica.</title>
        <authorList>
            <person name="Parkhill J."/>
            <person name="Sebaihia M."/>
            <person name="Preston A."/>
            <person name="Murphy L.D."/>
            <person name="Thomson N.R."/>
            <person name="Harris D.E."/>
            <person name="Holden M.T.G."/>
            <person name="Churcher C.M."/>
            <person name="Bentley S.D."/>
            <person name="Mungall K.L."/>
            <person name="Cerdeno-Tarraga A.-M."/>
            <person name="Temple L."/>
            <person name="James K.D."/>
            <person name="Harris B."/>
            <person name="Quail M.A."/>
            <person name="Achtman M."/>
            <person name="Atkin R."/>
            <person name="Baker S."/>
            <person name="Basham D."/>
            <person name="Bason N."/>
            <person name="Cherevach I."/>
            <person name="Chillingworth T."/>
            <person name="Collins M."/>
            <person name="Cronin A."/>
            <person name="Davis P."/>
            <person name="Doggett J."/>
            <person name="Feltwell T."/>
            <person name="Goble A."/>
            <person name="Hamlin N."/>
            <person name="Hauser H."/>
            <person name="Holroyd S."/>
            <person name="Jagels K."/>
            <person name="Leather S."/>
            <person name="Moule S."/>
            <person name="Norberczak H."/>
            <person name="O'Neil S."/>
            <person name="Ormond D."/>
            <person name="Price C."/>
            <person name="Rabbinowitsch E."/>
            <person name="Rutter S."/>
            <person name="Sanders M."/>
            <person name="Saunders D."/>
            <person name="Seeger K."/>
            <person name="Sharp S."/>
            <person name="Simmonds M."/>
            <person name="Skelton J."/>
            <person name="Squares R."/>
            <person name="Squares S."/>
            <person name="Stevens K."/>
            <person name="Unwin L."/>
            <person name="Whitehead S."/>
            <person name="Barrell B.G."/>
            <person name="Maskell D.J."/>
        </authorList>
    </citation>
    <scope>NUCLEOTIDE SEQUENCE [LARGE SCALE GENOMIC DNA]</scope>
    <source>
        <strain>Tohama I / ATCC BAA-589 / NCTC 13251</strain>
    </source>
</reference>
<dbReference type="EC" id="2.5.1.19" evidence="1"/>
<dbReference type="EMBL" id="M20023">
    <property type="protein sequence ID" value="AAA22968.1"/>
    <property type="molecule type" value="Genomic_DNA"/>
</dbReference>
<dbReference type="EMBL" id="BX640413">
    <property type="protein sequence ID" value="CAE41250.1"/>
    <property type="molecule type" value="Genomic_DNA"/>
</dbReference>
<dbReference type="PIR" id="A32007">
    <property type="entry name" value="XUBRVS"/>
</dbReference>
<dbReference type="RefSeq" id="NP_879749.1">
    <property type="nucleotide sequence ID" value="NC_002929.2"/>
</dbReference>
<dbReference type="RefSeq" id="WP_010930099.1">
    <property type="nucleotide sequence ID" value="NZ_CP039022.1"/>
</dbReference>
<dbReference type="SMR" id="P12421"/>
<dbReference type="STRING" id="257313.BP0948"/>
<dbReference type="PaxDb" id="257313-BP0948"/>
<dbReference type="GeneID" id="69600874"/>
<dbReference type="KEGG" id="bpe:BP0948"/>
<dbReference type="PATRIC" id="fig|257313.5.peg.1012"/>
<dbReference type="eggNOG" id="COG0128">
    <property type="taxonomic scope" value="Bacteria"/>
</dbReference>
<dbReference type="HOGENOM" id="CLU_024321_0_0_4"/>
<dbReference type="UniPathway" id="UPA00053">
    <property type="reaction ID" value="UER00089"/>
</dbReference>
<dbReference type="Proteomes" id="UP000002676">
    <property type="component" value="Chromosome"/>
</dbReference>
<dbReference type="GO" id="GO:0005737">
    <property type="term" value="C:cytoplasm"/>
    <property type="evidence" value="ECO:0007669"/>
    <property type="project" value="UniProtKB-SubCell"/>
</dbReference>
<dbReference type="GO" id="GO:0003866">
    <property type="term" value="F:3-phosphoshikimate 1-carboxyvinyltransferase activity"/>
    <property type="evidence" value="ECO:0007669"/>
    <property type="project" value="UniProtKB-UniRule"/>
</dbReference>
<dbReference type="GO" id="GO:0008652">
    <property type="term" value="P:amino acid biosynthetic process"/>
    <property type="evidence" value="ECO:0007669"/>
    <property type="project" value="UniProtKB-KW"/>
</dbReference>
<dbReference type="GO" id="GO:0009073">
    <property type="term" value="P:aromatic amino acid family biosynthetic process"/>
    <property type="evidence" value="ECO:0007669"/>
    <property type="project" value="UniProtKB-KW"/>
</dbReference>
<dbReference type="GO" id="GO:0009423">
    <property type="term" value="P:chorismate biosynthetic process"/>
    <property type="evidence" value="ECO:0007669"/>
    <property type="project" value="UniProtKB-UniRule"/>
</dbReference>
<dbReference type="CDD" id="cd01556">
    <property type="entry name" value="EPSP_synthase"/>
    <property type="match status" value="1"/>
</dbReference>
<dbReference type="FunFam" id="3.65.10.10:FF:000004">
    <property type="entry name" value="3-phosphoshikimate 1-carboxyvinyltransferase"/>
    <property type="match status" value="1"/>
</dbReference>
<dbReference type="Gene3D" id="3.65.10.10">
    <property type="entry name" value="Enolpyruvate transferase domain"/>
    <property type="match status" value="2"/>
</dbReference>
<dbReference type="HAMAP" id="MF_00210">
    <property type="entry name" value="EPSP_synth"/>
    <property type="match status" value="1"/>
</dbReference>
<dbReference type="InterPro" id="IPR001986">
    <property type="entry name" value="Enolpyruvate_Tfrase_dom"/>
</dbReference>
<dbReference type="InterPro" id="IPR036968">
    <property type="entry name" value="Enolpyruvate_Tfrase_sf"/>
</dbReference>
<dbReference type="InterPro" id="IPR006264">
    <property type="entry name" value="EPSP_synthase"/>
</dbReference>
<dbReference type="InterPro" id="IPR023193">
    <property type="entry name" value="EPSP_synthase_CS"/>
</dbReference>
<dbReference type="InterPro" id="IPR013792">
    <property type="entry name" value="RNA3'P_cycl/enolpyr_Trfase_a/b"/>
</dbReference>
<dbReference type="NCBIfam" id="TIGR01356">
    <property type="entry name" value="aroA"/>
    <property type="match status" value="1"/>
</dbReference>
<dbReference type="PANTHER" id="PTHR21090">
    <property type="entry name" value="AROM/DEHYDROQUINATE SYNTHASE"/>
    <property type="match status" value="1"/>
</dbReference>
<dbReference type="PANTHER" id="PTHR21090:SF5">
    <property type="entry name" value="PENTAFUNCTIONAL AROM POLYPEPTIDE"/>
    <property type="match status" value="1"/>
</dbReference>
<dbReference type="Pfam" id="PF00275">
    <property type="entry name" value="EPSP_synthase"/>
    <property type="match status" value="1"/>
</dbReference>
<dbReference type="PIRSF" id="PIRSF000505">
    <property type="entry name" value="EPSPS"/>
    <property type="match status" value="1"/>
</dbReference>
<dbReference type="SUPFAM" id="SSF55205">
    <property type="entry name" value="EPT/RTPC-like"/>
    <property type="match status" value="1"/>
</dbReference>
<dbReference type="PROSITE" id="PS00104">
    <property type="entry name" value="EPSP_SYNTHASE_1"/>
    <property type="match status" value="1"/>
</dbReference>
<dbReference type="PROSITE" id="PS00885">
    <property type="entry name" value="EPSP_SYNTHASE_2"/>
    <property type="match status" value="1"/>
</dbReference>
<evidence type="ECO:0000255" key="1">
    <source>
        <dbReference type="HAMAP-Rule" id="MF_00210"/>
    </source>
</evidence>
<evidence type="ECO:0000305" key="2"/>